<keyword id="KW-1185">Reference proteome</keyword>
<keyword id="KW-0687">Ribonucleoprotein</keyword>
<keyword id="KW-0689">Ribosomal protein</keyword>
<proteinExistence type="inferred from homology"/>
<organism>
    <name type="scientific">Nocardia farcinica (strain IFM 10152)</name>
    <dbReference type="NCBI Taxonomy" id="247156"/>
    <lineage>
        <taxon>Bacteria</taxon>
        <taxon>Bacillati</taxon>
        <taxon>Actinomycetota</taxon>
        <taxon>Actinomycetes</taxon>
        <taxon>Mycobacteriales</taxon>
        <taxon>Nocardiaceae</taxon>
        <taxon>Nocardia</taxon>
    </lineage>
</organism>
<dbReference type="EMBL" id="AP006618">
    <property type="protein sequence ID" value="BAD55711.1"/>
    <property type="molecule type" value="Genomic_DNA"/>
</dbReference>
<dbReference type="RefSeq" id="WP_011207396.1">
    <property type="nucleotide sequence ID" value="NC_006361.1"/>
</dbReference>
<dbReference type="SMR" id="Q5Z1I0"/>
<dbReference type="STRING" id="247156.NFA_8660"/>
<dbReference type="GeneID" id="61131694"/>
<dbReference type="KEGG" id="nfa:NFA_8660"/>
<dbReference type="eggNOG" id="COG0102">
    <property type="taxonomic scope" value="Bacteria"/>
</dbReference>
<dbReference type="HOGENOM" id="CLU_082184_2_2_11"/>
<dbReference type="OrthoDB" id="9801330at2"/>
<dbReference type="Proteomes" id="UP000006820">
    <property type="component" value="Chromosome"/>
</dbReference>
<dbReference type="GO" id="GO:0022625">
    <property type="term" value="C:cytosolic large ribosomal subunit"/>
    <property type="evidence" value="ECO:0007669"/>
    <property type="project" value="TreeGrafter"/>
</dbReference>
<dbReference type="GO" id="GO:0003729">
    <property type="term" value="F:mRNA binding"/>
    <property type="evidence" value="ECO:0007669"/>
    <property type="project" value="TreeGrafter"/>
</dbReference>
<dbReference type="GO" id="GO:0003735">
    <property type="term" value="F:structural constituent of ribosome"/>
    <property type="evidence" value="ECO:0007669"/>
    <property type="project" value="InterPro"/>
</dbReference>
<dbReference type="GO" id="GO:0017148">
    <property type="term" value="P:negative regulation of translation"/>
    <property type="evidence" value="ECO:0007669"/>
    <property type="project" value="TreeGrafter"/>
</dbReference>
<dbReference type="GO" id="GO:0006412">
    <property type="term" value="P:translation"/>
    <property type="evidence" value="ECO:0007669"/>
    <property type="project" value="UniProtKB-UniRule"/>
</dbReference>
<dbReference type="CDD" id="cd00392">
    <property type="entry name" value="Ribosomal_L13"/>
    <property type="match status" value="1"/>
</dbReference>
<dbReference type="FunFam" id="3.90.1180.10:FF:000001">
    <property type="entry name" value="50S ribosomal protein L13"/>
    <property type="match status" value="1"/>
</dbReference>
<dbReference type="Gene3D" id="3.90.1180.10">
    <property type="entry name" value="Ribosomal protein L13"/>
    <property type="match status" value="1"/>
</dbReference>
<dbReference type="HAMAP" id="MF_01366">
    <property type="entry name" value="Ribosomal_uL13"/>
    <property type="match status" value="1"/>
</dbReference>
<dbReference type="InterPro" id="IPR005822">
    <property type="entry name" value="Ribosomal_uL13"/>
</dbReference>
<dbReference type="InterPro" id="IPR005823">
    <property type="entry name" value="Ribosomal_uL13_bac-type"/>
</dbReference>
<dbReference type="InterPro" id="IPR023563">
    <property type="entry name" value="Ribosomal_uL13_CS"/>
</dbReference>
<dbReference type="InterPro" id="IPR036899">
    <property type="entry name" value="Ribosomal_uL13_sf"/>
</dbReference>
<dbReference type="NCBIfam" id="TIGR01066">
    <property type="entry name" value="rplM_bact"/>
    <property type="match status" value="1"/>
</dbReference>
<dbReference type="PANTHER" id="PTHR11545:SF2">
    <property type="entry name" value="LARGE RIBOSOMAL SUBUNIT PROTEIN UL13M"/>
    <property type="match status" value="1"/>
</dbReference>
<dbReference type="PANTHER" id="PTHR11545">
    <property type="entry name" value="RIBOSOMAL PROTEIN L13"/>
    <property type="match status" value="1"/>
</dbReference>
<dbReference type="Pfam" id="PF00572">
    <property type="entry name" value="Ribosomal_L13"/>
    <property type="match status" value="1"/>
</dbReference>
<dbReference type="PIRSF" id="PIRSF002181">
    <property type="entry name" value="Ribosomal_L13"/>
    <property type="match status" value="1"/>
</dbReference>
<dbReference type="SUPFAM" id="SSF52161">
    <property type="entry name" value="Ribosomal protein L13"/>
    <property type="match status" value="1"/>
</dbReference>
<dbReference type="PROSITE" id="PS00783">
    <property type="entry name" value="RIBOSOMAL_L13"/>
    <property type="match status" value="1"/>
</dbReference>
<comment type="function">
    <text evidence="1">This protein is one of the early assembly proteins of the 50S ribosomal subunit, although it is not seen to bind rRNA by itself. It is important during the early stages of 50S assembly.</text>
</comment>
<comment type="subunit">
    <text evidence="1">Part of the 50S ribosomal subunit.</text>
</comment>
<comment type="similarity">
    <text evidence="1">Belongs to the universal ribosomal protein uL13 family.</text>
</comment>
<accession>Q5Z1I0</accession>
<evidence type="ECO:0000255" key="1">
    <source>
        <dbReference type="HAMAP-Rule" id="MF_01366"/>
    </source>
</evidence>
<evidence type="ECO:0000305" key="2"/>
<name>RL13_NOCFA</name>
<protein>
    <recommendedName>
        <fullName evidence="1">Large ribosomal subunit protein uL13</fullName>
    </recommendedName>
    <alternativeName>
        <fullName evidence="2">50S ribosomal protein L13</fullName>
    </alternativeName>
</protein>
<gene>
    <name evidence="1" type="primary">rplM</name>
    <name type="ordered locus">NFA_8660</name>
</gene>
<sequence length="147" mass="15946">MPTYSPKAGDVTRQWYVIDATDVVLGRLAVQAANLLRGKNKPTYAPHVDGGDFVIIINAEKVAISGNKRQDKLIHHHSGHPGGLKSRTVGQVLETRPERLVEKAVKGMIPKNKLGNAIAGKLKVYAGPNHPHAAQQPVPFEIKQVAQ</sequence>
<feature type="chain" id="PRO_0000261759" description="Large ribosomal subunit protein uL13">
    <location>
        <begin position="1"/>
        <end position="147"/>
    </location>
</feature>
<reference key="1">
    <citation type="journal article" date="2004" name="Proc. Natl. Acad. Sci. U.S.A.">
        <title>The complete genomic sequence of Nocardia farcinica IFM 10152.</title>
        <authorList>
            <person name="Ishikawa J."/>
            <person name="Yamashita A."/>
            <person name="Mikami Y."/>
            <person name="Hoshino Y."/>
            <person name="Kurita H."/>
            <person name="Hotta K."/>
            <person name="Shiba T."/>
            <person name="Hattori M."/>
        </authorList>
    </citation>
    <scope>NUCLEOTIDE SEQUENCE [LARGE SCALE GENOMIC DNA]</scope>
    <source>
        <strain>IFM 10152</strain>
    </source>
</reference>